<keyword id="KW-1003">Cell membrane</keyword>
<keyword id="KW-0325">Glycoprotein</keyword>
<keyword id="KW-0472">Membrane</keyword>
<keyword id="KW-1185">Reference proteome</keyword>
<keyword id="KW-0812">Transmembrane</keyword>
<keyword id="KW-1133">Transmembrane helix</keyword>
<keyword id="KW-0813">Transport</keyword>
<evidence type="ECO:0000255" key="1"/>
<evidence type="ECO:0000255" key="2">
    <source>
        <dbReference type="PROSITE-ProRule" id="PRU00498"/>
    </source>
</evidence>
<evidence type="ECO:0000269" key="3">
    <source>
    </source>
</evidence>
<evidence type="ECO:0000303" key="4">
    <source>
    </source>
</evidence>
<evidence type="ECO:0000305" key="5"/>
<evidence type="ECO:0000305" key="6">
    <source>
    </source>
</evidence>
<evidence type="ECO:0000312" key="7">
    <source>
        <dbReference type="EMBL" id="CAD51089.1"/>
    </source>
</evidence>
<evidence type="ECO:0000312" key="8">
    <source>
        <dbReference type="Proteomes" id="UP000001450"/>
    </source>
</evidence>
<name>FT1_PLAF7</name>
<protein>
    <recommendedName>
        <fullName evidence="4">Folate transporter 1</fullName>
        <shortName evidence="4">PfFT1</shortName>
    </recommendedName>
</protein>
<accession>Q8IBB7</accession>
<sequence>MEDDDFSIKDKKENYETCSTETISSYISINEKCQLIEKDINDDNHENPYMIFNKISSSLIAMLQGVEVLCNLSIIYLLKDNYHLHPASLSIVMCFIKIPWSIKLVWAVISDNYPIFGYRRKYYLLLGSFLCILSLICLGLITHNNLFITILLLFIYFFGSSLCNVIGEAQVVESNRNCSINSSARNVSLFFAFRKLSFAIMSYLSGYLLLLISKKHIFLIGSFLPICVFTSGFFIIEKRNYTKSSIKDQIKCIYSIIKLSYLKNFIIFIFIMMSTPSCGNTLFFYITNELKFSPNLLGKMAMFQSLASFISIISYMLFFTKIDIRKLLLYSTIIITPFCLLPLVVIKKVNYFLFIPNTLFFITDTVLIEFIAEFQTMPILVLCSRLIPEGFESTIYSLLLSSNNFASIISSFLSSLLTYSLNITSTNFTNLPYMIIICCLTNIIPIFFLYILPNHSQKKNLQHSNSHTQKYYSYPSTDYISSQKSDSSEITKFSADMQIDDITLE</sequence>
<comment type="function">
    <text evidence="3">Folate transporter with broad substrate specificity (PubMed:21998306). Transports folic acid, folinic acid, pteroic acid, dihydropteroic acid, the folate precursor p-amino benzoic acid (pABA) and the human folate catabolite pABA monoglutamate (PubMed:21998306).</text>
</comment>
<comment type="catalytic activity">
    <reaction evidence="6">
        <text>folate(in) + H(+)(in) = folate(out) + H(+)(out)</text>
        <dbReference type="Rhea" id="RHEA:70159"/>
        <dbReference type="ChEBI" id="CHEBI:15378"/>
        <dbReference type="ChEBI" id="CHEBI:62501"/>
    </reaction>
</comment>
<comment type="activity regulation">
    <text evidence="3">Transport of folates is inhibited by probenecid and methotrexate.</text>
</comment>
<comment type="subcellular location">
    <subcellularLocation>
        <location evidence="3">Cell membrane</location>
        <topology evidence="1">Multi-pass membrane protein</topology>
    </subcellularLocation>
    <text evidence="3">In intraerythrocytic stage parasites, localizes to the plasma membrane and some intracellular vesicular structures.</text>
</comment>
<comment type="similarity">
    <text evidence="5">Belongs to the major facilitator superfamily. Folate-biopterin transporter (TC 2.A.71) family.</text>
</comment>
<dbReference type="EMBL" id="AL844507">
    <property type="protein sequence ID" value="CAD51089.1"/>
    <property type="molecule type" value="Genomic_DNA"/>
</dbReference>
<dbReference type="RefSeq" id="XP_001349240.1">
    <property type="nucleotide sequence ID" value="XM_001349204.1"/>
</dbReference>
<dbReference type="STRING" id="36329.Q8IBB7"/>
<dbReference type="TCDB" id="2.A.71.2.7">
    <property type="family name" value="the folate-biopterin transporter (fbt) family"/>
</dbReference>
<dbReference type="PaxDb" id="5833-MAL8P1.13"/>
<dbReference type="EnsemblProtists" id="CAD51089">
    <property type="protein sequence ID" value="CAD51089"/>
    <property type="gene ID" value="PF3D7_0828600"/>
</dbReference>
<dbReference type="GeneID" id="2655218"/>
<dbReference type="KEGG" id="pfa:PF3D7_0828600"/>
<dbReference type="VEuPathDB" id="PlasmoDB:PF3D7_0828600"/>
<dbReference type="HOGENOM" id="CLU_018563_3_2_1"/>
<dbReference type="InParanoid" id="Q8IBB7"/>
<dbReference type="OMA" id="GIDDHWF"/>
<dbReference type="OrthoDB" id="754047at2759"/>
<dbReference type="PhylomeDB" id="Q8IBB7"/>
<dbReference type="Proteomes" id="UP000001450">
    <property type="component" value="Chromosome 8"/>
</dbReference>
<dbReference type="GO" id="GO:0005886">
    <property type="term" value="C:plasma membrane"/>
    <property type="evidence" value="ECO:0000314"/>
    <property type="project" value="GeneDB"/>
</dbReference>
<dbReference type="GO" id="GO:0008517">
    <property type="term" value="F:folic acid transmembrane transporter activity"/>
    <property type="evidence" value="ECO:0000314"/>
    <property type="project" value="GeneDB"/>
</dbReference>
<dbReference type="CDD" id="cd17484">
    <property type="entry name" value="MFS_FBT"/>
    <property type="match status" value="1"/>
</dbReference>
<dbReference type="Gene3D" id="1.20.1250.20">
    <property type="entry name" value="MFS general substrate transporter like domains"/>
    <property type="match status" value="2"/>
</dbReference>
<dbReference type="InterPro" id="IPR039309">
    <property type="entry name" value="BT1"/>
</dbReference>
<dbReference type="InterPro" id="IPR036259">
    <property type="entry name" value="MFS_trans_sf"/>
</dbReference>
<dbReference type="PANTHER" id="PTHR31585">
    <property type="entry name" value="FOLATE-BIOPTERIN TRANSPORTER 1, CHLOROPLASTIC"/>
    <property type="match status" value="1"/>
</dbReference>
<dbReference type="PANTHER" id="PTHR31585:SF0">
    <property type="entry name" value="FOLATE-BIOPTERIN TRANSPORTER 1, CHLOROPLASTIC"/>
    <property type="match status" value="1"/>
</dbReference>
<dbReference type="Pfam" id="PF03092">
    <property type="entry name" value="BT1"/>
    <property type="match status" value="1"/>
</dbReference>
<dbReference type="SUPFAM" id="SSF103473">
    <property type="entry name" value="MFS general substrate transporter"/>
    <property type="match status" value="1"/>
</dbReference>
<feature type="chain" id="PRO_0000461660" description="Folate transporter 1">
    <location>
        <begin position="1"/>
        <end position="505"/>
    </location>
</feature>
<feature type="transmembrane region" description="Helical" evidence="1">
    <location>
        <begin position="58"/>
        <end position="78"/>
    </location>
</feature>
<feature type="transmembrane region" description="Helical" evidence="1">
    <location>
        <begin position="89"/>
        <end position="109"/>
    </location>
</feature>
<feature type="transmembrane region" description="Helical" evidence="1">
    <location>
        <begin position="122"/>
        <end position="142"/>
    </location>
</feature>
<feature type="transmembrane region" description="Helical" evidence="1">
    <location>
        <begin position="146"/>
        <end position="166"/>
    </location>
</feature>
<feature type="transmembrane region" description="Helical" evidence="1">
    <location>
        <begin position="192"/>
        <end position="212"/>
    </location>
</feature>
<feature type="transmembrane region" description="Helical" evidence="1">
    <location>
        <begin position="216"/>
        <end position="236"/>
    </location>
</feature>
<feature type="transmembrane region" description="Helical" evidence="1">
    <location>
        <begin position="266"/>
        <end position="286"/>
    </location>
</feature>
<feature type="transmembrane region" description="Helical" evidence="1">
    <location>
        <begin position="300"/>
        <end position="320"/>
    </location>
</feature>
<feature type="transmembrane region" description="Helical" evidence="1">
    <location>
        <begin position="326"/>
        <end position="346"/>
    </location>
</feature>
<feature type="transmembrane region" description="Helical" evidence="1">
    <location>
        <begin position="352"/>
        <end position="372"/>
    </location>
</feature>
<feature type="transmembrane region" description="Helical" evidence="1">
    <location>
        <begin position="405"/>
        <end position="425"/>
    </location>
</feature>
<feature type="transmembrane region" description="Helical" evidence="1">
    <location>
        <begin position="431"/>
        <end position="451"/>
    </location>
</feature>
<feature type="glycosylation site" description="N-linked (GlcNAc...) asparagine" evidence="2">
    <location>
        <position position="177"/>
    </location>
</feature>
<feature type="glycosylation site" description="N-linked (GlcNAc...) asparagine" evidence="2">
    <location>
        <position position="181"/>
    </location>
</feature>
<feature type="glycosylation site" description="N-linked (GlcNAc...) asparagine" evidence="2">
    <location>
        <position position="186"/>
    </location>
</feature>
<feature type="glycosylation site" description="N-linked (GlcNAc...) asparagine" evidence="2">
    <location>
        <position position="240"/>
    </location>
</feature>
<feature type="glycosylation site" description="N-linked (GlcNAc...) asparagine" evidence="2">
    <location>
        <position position="427"/>
    </location>
</feature>
<feature type="glycosylation site" description="N-linked (GlcNAc...) asparagine" evidence="2">
    <location>
        <position position="454"/>
    </location>
</feature>
<organism evidence="8">
    <name type="scientific">Plasmodium falciparum (isolate 3D7)</name>
    <dbReference type="NCBI Taxonomy" id="36329"/>
    <lineage>
        <taxon>Eukaryota</taxon>
        <taxon>Sar</taxon>
        <taxon>Alveolata</taxon>
        <taxon>Apicomplexa</taxon>
        <taxon>Aconoidasida</taxon>
        <taxon>Haemosporida</taxon>
        <taxon>Plasmodiidae</taxon>
        <taxon>Plasmodium</taxon>
        <taxon>Plasmodium (Laverania)</taxon>
    </lineage>
</organism>
<proteinExistence type="inferred from homology"/>
<gene>
    <name evidence="7" type="ORF">PF3D7_0828600</name>
</gene>
<reference evidence="8" key="1">
    <citation type="journal article" date="2002" name="Nature">
        <title>Genome sequence of the human malaria parasite Plasmodium falciparum.</title>
        <authorList>
            <person name="Gardner M.J."/>
            <person name="Hall N."/>
            <person name="Fung E."/>
            <person name="White O."/>
            <person name="Berriman M."/>
            <person name="Hyman R.W."/>
            <person name="Carlton J.M."/>
            <person name="Pain A."/>
            <person name="Nelson K.E."/>
            <person name="Bowman S."/>
            <person name="Paulsen I.T."/>
            <person name="James K.D."/>
            <person name="Eisen J.A."/>
            <person name="Rutherford K.M."/>
            <person name="Salzberg S.L."/>
            <person name="Craig A."/>
            <person name="Kyes S."/>
            <person name="Chan M.-S."/>
            <person name="Nene V."/>
            <person name="Shallom S.J."/>
            <person name="Suh B."/>
            <person name="Peterson J."/>
            <person name="Angiuoli S."/>
            <person name="Pertea M."/>
            <person name="Allen J."/>
            <person name="Selengut J."/>
            <person name="Haft D."/>
            <person name="Mather M.W."/>
            <person name="Vaidya A.B."/>
            <person name="Martin D.M.A."/>
            <person name="Fairlamb A.H."/>
            <person name="Fraunholz M.J."/>
            <person name="Roos D.S."/>
            <person name="Ralph S.A."/>
            <person name="McFadden G.I."/>
            <person name="Cummings L.M."/>
            <person name="Subramanian G.M."/>
            <person name="Mungall C."/>
            <person name="Venter J.C."/>
            <person name="Carucci D.J."/>
            <person name="Hoffman S.L."/>
            <person name="Newbold C."/>
            <person name="Davis R.W."/>
            <person name="Fraser C.M."/>
            <person name="Barrell B.G."/>
        </authorList>
    </citation>
    <scope>NUCLEOTIDE SEQUENCE [LARGE SCALE GENOMIC DNA]</scope>
    <source>
        <strain evidence="8">3D7</strain>
    </source>
</reference>
<reference evidence="8" key="2">
    <citation type="journal article" date="2002" name="Nature">
        <title>Sequence of Plasmodium falciparum chromosomes 1, 3-9 and 13.</title>
        <authorList>
            <person name="Hall N."/>
            <person name="Pain A."/>
            <person name="Berriman M."/>
            <person name="Churcher C.M."/>
            <person name="Harris B."/>
            <person name="Harris D."/>
            <person name="Mungall K.L."/>
            <person name="Bowman S."/>
            <person name="Atkin R."/>
            <person name="Baker S."/>
            <person name="Barron A."/>
            <person name="Brooks K."/>
            <person name="Buckee C.O."/>
            <person name="Burrows C."/>
            <person name="Cherevach I."/>
            <person name="Chillingworth C."/>
            <person name="Chillingworth T."/>
            <person name="Christodoulou Z."/>
            <person name="Clark L."/>
            <person name="Clark R."/>
            <person name="Corton C."/>
            <person name="Cronin A."/>
            <person name="Davies R.M."/>
            <person name="Davis P."/>
            <person name="Dear P."/>
            <person name="Dearden F."/>
            <person name="Doggett J."/>
            <person name="Feltwell T."/>
            <person name="Goble A."/>
            <person name="Goodhead I."/>
            <person name="Gwilliam R."/>
            <person name="Hamlin N."/>
            <person name="Hance Z."/>
            <person name="Harper D."/>
            <person name="Hauser H."/>
            <person name="Hornsby T."/>
            <person name="Holroyd S."/>
            <person name="Horrocks P."/>
            <person name="Humphray S."/>
            <person name="Jagels K."/>
            <person name="James K.D."/>
            <person name="Johnson D."/>
            <person name="Kerhornou A."/>
            <person name="Knights A."/>
            <person name="Konfortov B."/>
            <person name="Kyes S."/>
            <person name="Larke N."/>
            <person name="Lawson D."/>
            <person name="Lennard N."/>
            <person name="Line A."/>
            <person name="Maddison M."/>
            <person name="Mclean J."/>
            <person name="Mooney P."/>
            <person name="Moule S."/>
            <person name="Murphy L."/>
            <person name="Oliver K."/>
            <person name="Ormond D."/>
            <person name="Price C."/>
            <person name="Quail M.A."/>
            <person name="Rabbinowitsch E."/>
            <person name="Rajandream M.A."/>
            <person name="Rutter S."/>
            <person name="Rutherford K.M."/>
            <person name="Sanders M."/>
            <person name="Simmonds M."/>
            <person name="Seeger K."/>
            <person name="Sharp S."/>
            <person name="Smith R."/>
            <person name="Squares R."/>
            <person name="Squares S."/>
            <person name="Stevens K."/>
            <person name="Taylor K."/>
            <person name="Tivey A."/>
            <person name="Unwin L."/>
            <person name="Whitehead S."/>
            <person name="Woodward J.R."/>
            <person name="Sulston J.E."/>
            <person name="Craig A."/>
            <person name="Newbold C."/>
            <person name="Barrell B.G."/>
        </authorList>
    </citation>
    <scope>NUCLEOTIDE SEQUENCE [LARGE SCALE GENOMIC DNA]</scope>
    <source>
        <strain evidence="8">3D7</strain>
    </source>
</reference>
<reference evidence="5" key="3">
    <citation type="journal article" date="2011" name="J. Biol. Chem.">
        <title>The molecular basis of folate salvage in Plasmodium falciparum: characterization of two folate transporters.</title>
        <authorList>
            <person name="Salcedo-Sora J.E."/>
            <person name="Ochong E."/>
            <person name="Beveridge S."/>
            <person name="Johnson D."/>
            <person name="Nzila A."/>
            <person name="Biagini G.A."/>
            <person name="Stocks P.A."/>
            <person name="O'Neill P.M."/>
            <person name="Krishna S."/>
            <person name="Bray P.G."/>
            <person name="Ward S.A."/>
        </authorList>
    </citation>
    <scope>FUNCTION</scope>
    <scope>TRANSPORTER ACTIVITY</scope>
    <scope>ACTIVITY REGULATION</scope>
    <scope>SUBCELLULAR LOCATION</scope>
</reference>